<proteinExistence type="inferred from homology"/>
<gene>
    <name evidence="1" type="primary">secA2</name>
    <name type="ordered locus">lin0592</name>
</gene>
<sequence>MRQNYDDRKIVKQYREIARQIVRKEGLYKNMDQDELREQTNFWREKFKTKPMTERDKINIFALAREAASRIIGLDAVVVQLIGALVLGDGKVAEMKTGEGKTLMSLFVMFIEVMRGNRVHLVTANEYLARRDREEIGQVLEYLGISVALNESGLDKDQKKAIYTADVIYGTASEFGFDYLRDNMVRQKEDKVQSGLDFVLIDEADSILIDEARTPLLISDRKEEDLSLYQTANELVQTMMKDDYEIEEHKRFVWLNDAGIERAQKFWGVESLYSAEAQVELRITMLLMRAHFLMHKDKDYVVLDGEVLIIDPHTGRALPGRRFNDGLHQAIEAKEGVEVKEESRTLATITIQNYFRMYKRLSGMTGTAKTEEEEFRQIYNMDVVVIPTNLRVNREDMPDDIFYTKKEKGRAIVYEVSWRYEKGQPTLIGTSSIKSNEWISSLLDAAGIPHQVLNAKNHAQEAEIIAKAGKRGMVTLATNMAGRGTDIKLDPDVHKLGGLAVIGTERHESRRIDLQLMGRSGRRGDPGFSKFMISLEDDLLEQFESKSWEKLSTKLKRKAPRDGKPVNSRKIHSVIVDAQKRLEGANYDIRKDLLSYDEVIDLQRKMVYKERDQLLERNKLGVSSEKILREVAEYSFIHPLELEEEELEKYYSRQKELLGGTKFPISFDQVTLMDPVEVVEEIVAWHKKERNKFPVETITAIEKEVYLNLMDQMWVMHLDAMVQLREGIHLRAYGQQDPLVMYQKEGAQLFEKFQADYHFYFAHALLELDPDGLIQG</sequence>
<comment type="function">
    <text evidence="1">Part of the Sec protein translocase complex. Interacts with the SecYEG preprotein conducting channel. Has a central role in coupling the hydrolysis of ATP to the transfer of proteins into and across the cell membrane, serving as an ATP-driven molecular motor driving the stepwise translocation of polypeptide chains across the membrane.</text>
</comment>
<comment type="catalytic activity">
    <reaction evidence="1">
        <text>ATP + H2O + cellular proteinSide 1 = ADP + phosphate + cellular proteinSide 2.</text>
        <dbReference type="EC" id="7.4.2.8"/>
    </reaction>
</comment>
<comment type="subunit">
    <text evidence="1">Monomer and homodimer. Part of the essential Sec protein translocation apparatus which comprises SecA, SecYEG and auxiliary proteins SecDF. Other proteins may also be involved.</text>
</comment>
<comment type="subcellular location">
    <subcellularLocation>
        <location evidence="1">Cell membrane</location>
        <topology evidence="1">Peripheral membrane protein</topology>
        <orientation evidence="1">Cytoplasmic side</orientation>
    </subcellularLocation>
    <subcellularLocation>
        <location evidence="1">Cytoplasm</location>
    </subcellularLocation>
    <text evidence="1">Distribution is 50-50.</text>
</comment>
<comment type="similarity">
    <text evidence="1">Belongs to the SecA family.</text>
</comment>
<name>SECA2_LISIN</name>
<reference key="1">
    <citation type="journal article" date="2001" name="Science">
        <title>Comparative genomics of Listeria species.</title>
        <authorList>
            <person name="Glaser P."/>
            <person name="Frangeul L."/>
            <person name="Buchrieser C."/>
            <person name="Rusniok C."/>
            <person name="Amend A."/>
            <person name="Baquero F."/>
            <person name="Berche P."/>
            <person name="Bloecker H."/>
            <person name="Brandt P."/>
            <person name="Chakraborty T."/>
            <person name="Charbit A."/>
            <person name="Chetouani F."/>
            <person name="Couve E."/>
            <person name="de Daruvar A."/>
            <person name="Dehoux P."/>
            <person name="Domann E."/>
            <person name="Dominguez-Bernal G."/>
            <person name="Duchaud E."/>
            <person name="Durant L."/>
            <person name="Dussurget O."/>
            <person name="Entian K.-D."/>
            <person name="Fsihi H."/>
            <person name="Garcia-del Portillo F."/>
            <person name="Garrido P."/>
            <person name="Gautier L."/>
            <person name="Goebel W."/>
            <person name="Gomez-Lopez N."/>
            <person name="Hain T."/>
            <person name="Hauf J."/>
            <person name="Jackson D."/>
            <person name="Jones L.-M."/>
            <person name="Kaerst U."/>
            <person name="Kreft J."/>
            <person name="Kuhn M."/>
            <person name="Kunst F."/>
            <person name="Kurapkat G."/>
            <person name="Madueno E."/>
            <person name="Maitournam A."/>
            <person name="Mata Vicente J."/>
            <person name="Ng E."/>
            <person name="Nedjari H."/>
            <person name="Nordsiek G."/>
            <person name="Novella S."/>
            <person name="de Pablos B."/>
            <person name="Perez-Diaz J.-C."/>
            <person name="Purcell R."/>
            <person name="Remmel B."/>
            <person name="Rose M."/>
            <person name="Schlueter T."/>
            <person name="Simoes N."/>
            <person name="Tierrez A."/>
            <person name="Vazquez-Boland J.-A."/>
            <person name="Voss H."/>
            <person name="Wehland J."/>
            <person name="Cossart P."/>
        </authorList>
    </citation>
    <scope>NUCLEOTIDE SEQUENCE [LARGE SCALE GENOMIC DNA]</scope>
    <source>
        <strain>ATCC BAA-680 / CLIP 11262</strain>
    </source>
</reference>
<evidence type="ECO:0000255" key="1">
    <source>
        <dbReference type="HAMAP-Rule" id="MF_01382"/>
    </source>
</evidence>
<organism>
    <name type="scientific">Listeria innocua serovar 6a (strain ATCC BAA-680 / CLIP 11262)</name>
    <dbReference type="NCBI Taxonomy" id="272626"/>
    <lineage>
        <taxon>Bacteria</taxon>
        <taxon>Bacillati</taxon>
        <taxon>Bacillota</taxon>
        <taxon>Bacilli</taxon>
        <taxon>Bacillales</taxon>
        <taxon>Listeriaceae</taxon>
        <taxon>Listeria</taxon>
    </lineage>
</organism>
<feature type="chain" id="PRO_0000318365" description="Protein translocase subunit SecA 2">
    <location>
        <begin position="1"/>
        <end position="776"/>
    </location>
</feature>
<feature type="binding site" evidence="1">
    <location>
        <position position="80"/>
    </location>
    <ligand>
        <name>ATP</name>
        <dbReference type="ChEBI" id="CHEBI:30616"/>
    </ligand>
</feature>
<feature type="binding site" evidence="1">
    <location>
        <begin position="98"/>
        <end position="102"/>
    </location>
    <ligand>
        <name>ATP</name>
        <dbReference type="ChEBI" id="CHEBI:30616"/>
    </ligand>
</feature>
<feature type="binding site" evidence="1">
    <location>
        <position position="486"/>
    </location>
    <ligand>
        <name>ATP</name>
        <dbReference type="ChEBI" id="CHEBI:30616"/>
    </ligand>
</feature>
<protein>
    <recommendedName>
        <fullName evidence="1">Protein translocase subunit SecA 2</fullName>
        <ecNumber evidence="1">7.4.2.8</ecNumber>
    </recommendedName>
</protein>
<keyword id="KW-0067">ATP-binding</keyword>
<keyword id="KW-1003">Cell membrane</keyword>
<keyword id="KW-0963">Cytoplasm</keyword>
<keyword id="KW-0472">Membrane</keyword>
<keyword id="KW-0547">Nucleotide-binding</keyword>
<keyword id="KW-0653">Protein transport</keyword>
<keyword id="KW-1278">Translocase</keyword>
<keyword id="KW-0811">Translocation</keyword>
<keyword id="KW-0813">Transport</keyword>
<dbReference type="EC" id="7.4.2.8" evidence="1"/>
<dbReference type="EMBL" id="AL596165">
    <property type="protein sequence ID" value="CAC95824.1"/>
    <property type="molecule type" value="Genomic_DNA"/>
</dbReference>
<dbReference type="PIR" id="AH1506">
    <property type="entry name" value="AH1506"/>
</dbReference>
<dbReference type="RefSeq" id="WP_003770737.1">
    <property type="nucleotide sequence ID" value="NC_003212.1"/>
</dbReference>
<dbReference type="SMR" id="Q92E69"/>
<dbReference type="STRING" id="272626.gene:17564918"/>
<dbReference type="GeneID" id="93234040"/>
<dbReference type="KEGG" id="lin:lin0592"/>
<dbReference type="eggNOG" id="COG0653">
    <property type="taxonomic scope" value="Bacteria"/>
</dbReference>
<dbReference type="HOGENOM" id="CLU_005314_3_0_9"/>
<dbReference type="OrthoDB" id="9805579at2"/>
<dbReference type="Proteomes" id="UP000002513">
    <property type="component" value="Chromosome"/>
</dbReference>
<dbReference type="GO" id="GO:0031522">
    <property type="term" value="C:cell envelope Sec protein transport complex"/>
    <property type="evidence" value="ECO:0007669"/>
    <property type="project" value="TreeGrafter"/>
</dbReference>
<dbReference type="GO" id="GO:0005829">
    <property type="term" value="C:cytosol"/>
    <property type="evidence" value="ECO:0007669"/>
    <property type="project" value="TreeGrafter"/>
</dbReference>
<dbReference type="GO" id="GO:0005886">
    <property type="term" value="C:plasma membrane"/>
    <property type="evidence" value="ECO:0007669"/>
    <property type="project" value="UniProtKB-SubCell"/>
</dbReference>
<dbReference type="GO" id="GO:0005524">
    <property type="term" value="F:ATP binding"/>
    <property type="evidence" value="ECO:0007669"/>
    <property type="project" value="UniProtKB-UniRule"/>
</dbReference>
<dbReference type="GO" id="GO:0008564">
    <property type="term" value="F:protein-exporting ATPase activity"/>
    <property type="evidence" value="ECO:0007669"/>
    <property type="project" value="UniProtKB-EC"/>
</dbReference>
<dbReference type="GO" id="GO:0065002">
    <property type="term" value="P:intracellular protein transmembrane transport"/>
    <property type="evidence" value="ECO:0007669"/>
    <property type="project" value="UniProtKB-UniRule"/>
</dbReference>
<dbReference type="GO" id="GO:0017038">
    <property type="term" value="P:protein import"/>
    <property type="evidence" value="ECO:0007669"/>
    <property type="project" value="InterPro"/>
</dbReference>
<dbReference type="GO" id="GO:0006605">
    <property type="term" value="P:protein targeting"/>
    <property type="evidence" value="ECO:0007669"/>
    <property type="project" value="UniProtKB-UniRule"/>
</dbReference>
<dbReference type="GO" id="GO:0043952">
    <property type="term" value="P:protein transport by the Sec complex"/>
    <property type="evidence" value="ECO:0007669"/>
    <property type="project" value="TreeGrafter"/>
</dbReference>
<dbReference type="CDD" id="cd17928">
    <property type="entry name" value="DEXDc_SecA"/>
    <property type="match status" value="1"/>
</dbReference>
<dbReference type="CDD" id="cd18803">
    <property type="entry name" value="SF2_C_secA"/>
    <property type="match status" value="1"/>
</dbReference>
<dbReference type="FunFam" id="3.40.50.300:FF:000429">
    <property type="entry name" value="Preprotein translocase subunit SecA"/>
    <property type="match status" value="1"/>
</dbReference>
<dbReference type="Gene3D" id="1.10.3060.10">
    <property type="entry name" value="Helical scaffold and wing domains of SecA"/>
    <property type="match status" value="1"/>
</dbReference>
<dbReference type="Gene3D" id="3.40.50.300">
    <property type="entry name" value="P-loop containing nucleotide triphosphate hydrolases"/>
    <property type="match status" value="3"/>
</dbReference>
<dbReference type="Gene3D" id="3.90.1440.10">
    <property type="entry name" value="SecA, preprotein cross-linking domain"/>
    <property type="match status" value="1"/>
</dbReference>
<dbReference type="HAMAP" id="MF_01382">
    <property type="entry name" value="SecA"/>
    <property type="match status" value="1"/>
</dbReference>
<dbReference type="InterPro" id="IPR014001">
    <property type="entry name" value="Helicase_ATP-bd"/>
</dbReference>
<dbReference type="InterPro" id="IPR001650">
    <property type="entry name" value="Helicase_C-like"/>
</dbReference>
<dbReference type="InterPro" id="IPR027417">
    <property type="entry name" value="P-loop_NTPase"/>
</dbReference>
<dbReference type="InterPro" id="IPR000185">
    <property type="entry name" value="SecA"/>
</dbReference>
<dbReference type="InterPro" id="IPR011115">
    <property type="entry name" value="SecA_DEAD"/>
</dbReference>
<dbReference type="InterPro" id="IPR014018">
    <property type="entry name" value="SecA_motor_DEAD"/>
</dbReference>
<dbReference type="InterPro" id="IPR011130">
    <property type="entry name" value="SecA_preprotein_X-link_dom"/>
</dbReference>
<dbReference type="InterPro" id="IPR044722">
    <property type="entry name" value="SecA_SF2_C"/>
</dbReference>
<dbReference type="InterPro" id="IPR011116">
    <property type="entry name" value="SecA_Wing/Scaffold"/>
</dbReference>
<dbReference type="InterPro" id="IPR036266">
    <property type="entry name" value="SecA_Wing/Scaffold_sf"/>
</dbReference>
<dbReference type="InterPro" id="IPR036670">
    <property type="entry name" value="SecA_X-link_sf"/>
</dbReference>
<dbReference type="NCBIfam" id="NF006630">
    <property type="entry name" value="PRK09200.1"/>
    <property type="match status" value="1"/>
</dbReference>
<dbReference type="NCBIfam" id="NF012136">
    <property type="entry name" value="SecA2_Lm"/>
    <property type="match status" value="1"/>
</dbReference>
<dbReference type="PANTHER" id="PTHR30612:SF0">
    <property type="entry name" value="CHLOROPLAST PROTEIN-TRANSPORTING ATPASE"/>
    <property type="match status" value="1"/>
</dbReference>
<dbReference type="PANTHER" id="PTHR30612">
    <property type="entry name" value="SECA INNER MEMBRANE COMPONENT OF SEC PROTEIN SECRETION SYSTEM"/>
    <property type="match status" value="1"/>
</dbReference>
<dbReference type="Pfam" id="PF21090">
    <property type="entry name" value="P-loop_SecA"/>
    <property type="match status" value="1"/>
</dbReference>
<dbReference type="Pfam" id="PF07517">
    <property type="entry name" value="SecA_DEAD"/>
    <property type="match status" value="1"/>
</dbReference>
<dbReference type="Pfam" id="PF01043">
    <property type="entry name" value="SecA_PP_bind"/>
    <property type="match status" value="1"/>
</dbReference>
<dbReference type="Pfam" id="PF07516">
    <property type="entry name" value="SecA_SW"/>
    <property type="match status" value="1"/>
</dbReference>
<dbReference type="PRINTS" id="PR00906">
    <property type="entry name" value="SECA"/>
</dbReference>
<dbReference type="SMART" id="SM00957">
    <property type="entry name" value="SecA_DEAD"/>
    <property type="match status" value="1"/>
</dbReference>
<dbReference type="SMART" id="SM00958">
    <property type="entry name" value="SecA_PP_bind"/>
    <property type="match status" value="1"/>
</dbReference>
<dbReference type="SUPFAM" id="SSF81886">
    <property type="entry name" value="Helical scaffold and wing domains of SecA"/>
    <property type="match status" value="1"/>
</dbReference>
<dbReference type="SUPFAM" id="SSF52540">
    <property type="entry name" value="P-loop containing nucleoside triphosphate hydrolases"/>
    <property type="match status" value="2"/>
</dbReference>
<dbReference type="SUPFAM" id="SSF81767">
    <property type="entry name" value="Pre-protein crosslinking domain of SecA"/>
    <property type="match status" value="1"/>
</dbReference>
<dbReference type="PROSITE" id="PS51196">
    <property type="entry name" value="SECA_MOTOR_DEAD"/>
    <property type="match status" value="1"/>
</dbReference>
<accession>Q92E69</accession>